<protein>
    <recommendedName>
        <fullName evidence="9">Autophagy-related protein 5</fullName>
    </recommendedName>
</protein>
<reference evidence="8" key="1">
    <citation type="journal article" date="1998" name="Science">
        <title>Genome sequence of the nematode C. elegans: a platform for investigating biology.</title>
        <authorList>
            <consortium name="The C. elegans sequencing consortium"/>
        </authorList>
    </citation>
    <scope>NUCLEOTIDE SEQUENCE [LARGE SCALE GENOMIC DNA]</scope>
    <source>
        <strain evidence="8">Bristol N2</strain>
    </source>
</reference>
<reference evidence="6" key="2">
    <citation type="journal article" date="2013" name="Autophagy">
        <title>The two C. elegans ATG-16 homologs have partially redundant functions in the basal autophagy pathway.</title>
        <authorList>
            <person name="Zhang H."/>
            <person name="Wu F."/>
            <person name="Wang X."/>
            <person name="Du H."/>
            <person name="Wang X."/>
            <person name="Zhang H."/>
        </authorList>
    </citation>
    <scope>FUNCTION</scope>
    <scope>SUBUNIT</scope>
    <scope>INTERACTION WITH ATG-16.1 AND ATG-16.2</scope>
    <scope>SUBCELLULAR LOCATION</scope>
    <scope>MUTAGENESIS OF GLU-130</scope>
</reference>
<feature type="chain" id="PRO_0000447607" description="Autophagy-related protein 5">
    <location>
        <begin position="1"/>
        <end position="275"/>
    </location>
</feature>
<feature type="region of interest" description="Disordered" evidence="4">
    <location>
        <begin position="221"/>
        <end position="241"/>
    </location>
</feature>
<feature type="compositionally biased region" description="Low complexity" evidence="4">
    <location>
        <begin position="221"/>
        <end position="231"/>
    </location>
</feature>
<feature type="cross-link" description="Glycyl lysine isopeptide (Lys-Gly) (interchain with G-Cter in lgg-3/ATG12)" evidence="2">
    <location>
        <position position="129"/>
    </location>
</feature>
<feature type="splice variant" id="VSP_060205" description="In isoform b." evidence="6">
    <original>IPDNF</original>
    <variation>SMGVF</variation>
    <location>
        <begin position="159"/>
        <end position="163"/>
    </location>
</feature>
<feature type="splice variant" id="VSP_060206" description="In isoform c." evidence="6">
    <original>IPD</original>
    <variation>N</variation>
    <location>
        <begin position="159"/>
        <end position="161"/>
    </location>
</feature>
<feature type="splice variant" id="VSP_060207" description="In isoform b." evidence="6">
    <location>
        <begin position="164"/>
        <end position="275"/>
    </location>
</feature>
<feature type="mutagenesis site" description="In bp546; results in defective degradation of protein aggregates by autophagy." evidence="5">
    <original>E</original>
    <variation>K</variation>
    <location>
        <position position="130"/>
    </location>
</feature>
<gene>
    <name evidence="9" type="primary">atg-5</name>
    <name evidence="9" type="synonym">atgr-5</name>
    <name evidence="9" type="ORF">Y71G12B.12</name>
</gene>
<organism evidence="8">
    <name type="scientific">Caenorhabditis elegans</name>
    <dbReference type="NCBI Taxonomy" id="6239"/>
    <lineage>
        <taxon>Eukaryota</taxon>
        <taxon>Metazoa</taxon>
        <taxon>Ecdysozoa</taxon>
        <taxon>Nematoda</taxon>
        <taxon>Chromadorea</taxon>
        <taxon>Rhabditida</taxon>
        <taxon>Rhabditina</taxon>
        <taxon>Rhabditomorpha</taxon>
        <taxon>Rhabditoidea</taxon>
        <taxon>Rhabditidae</taxon>
        <taxon>Peloderinae</taxon>
        <taxon>Caenorhabditis</taxon>
    </lineage>
</organism>
<proteinExistence type="evidence at protein level"/>
<accession>Q3V5I7</accession>
<accession>Q3V5I8</accession>
<accession>W6RR39</accession>
<sequence length="275" mass="31339">MDYEVCRKVWESHVPCQFTLQSSGGTHGEPLPFYTMLPRFSYLALAIQKVLSSFNRRDDGEKVHSDKMWLEHNGIPLKMYIPIGVIYDQANLSENDSILEIIVRTSQPPPQFQMVDRDMMEAMFMQNIKEADYLKTKAEITKNMMKDESAQLWRSVCNIPDNFDEFWTIVQKLMETSEGNEFAHIPLRVYVKNQAFKQALITAKHPDGSLRTIGEAVSDVLSSSSSSSTDSQSEHPPRLISHGIDIPHHTPLIFAAKNLSYPDNFIHVVLLLVVP</sequence>
<keyword id="KW-0025">Alternative splicing</keyword>
<keyword id="KW-0072">Autophagy</keyword>
<keyword id="KW-1017">Isopeptide bond</keyword>
<keyword id="KW-0472">Membrane</keyword>
<keyword id="KW-1185">Reference proteome</keyword>
<keyword id="KW-0832">Ubl conjugation</keyword>
<name>ATG5_CAEEL</name>
<evidence type="ECO:0000250" key="1">
    <source>
        <dbReference type="UniProtKB" id="Q9H1Y0"/>
    </source>
</evidence>
<evidence type="ECO:0000250" key="2">
    <source>
        <dbReference type="UniProtKB" id="W0T4V8"/>
    </source>
</evidence>
<evidence type="ECO:0000255" key="3">
    <source>
        <dbReference type="RuleBase" id="RU361202"/>
    </source>
</evidence>
<evidence type="ECO:0000256" key="4">
    <source>
        <dbReference type="SAM" id="MobiDB-lite"/>
    </source>
</evidence>
<evidence type="ECO:0000269" key="5">
    <source>
    </source>
</evidence>
<evidence type="ECO:0000305" key="6"/>
<evidence type="ECO:0000305" key="7">
    <source>
    </source>
</evidence>
<evidence type="ECO:0000312" key="8">
    <source>
        <dbReference type="Proteomes" id="UP000001940"/>
    </source>
</evidence>
<evidence type="ECO:0000312" key="9">
    <source>
        <dbReference type="WormBase" id="Y71G12B.12a"/>
    </source>
</evidence>
<evidence type="ECO:0000312" key="10">
    <source>
        <dbReference type="WormBase" id="Y71G12B.12b"/>
    </source>
</evidence>
<evidence type="ECO:0000312" key="11">
    <source>
        <dbReference type="WormBase" id="Y71G12B.12c"/>
    </source>
</evidence>
<comment type="function">
    <text evidence="1 5 7">Involved in autophagic vesicle formation (By similarity). Conjugation with lgg-3/ATG12, through a ubiquitin-like conjugating system involving atg-7 as an E1-like activating enzyme and atg-10 as an E2-like conjugating enzyme, is essential for its function (By similarity). Most likely a component of an atg-5-lgg-3-atg-16 complex that promotes autophagosome formation by associating with lgg-2, but not lgg-1, at the preautophagosomal membrane (PubMed:24185444). Probably, as part of an atg-5-lgg-3-atg-16 complex, required for lgg-1 lipidation; the complex acts as an E3-like enzyme promoting atg-3-mediated lgg-1 lipidation (Probable). Furthermore, association with atg-16.2 is required for the nucleation of lgg-1 positive autophagic vesicles (PubMed:24185444).</text>
</comment>
<comment type="subunit">
    <text evidence="3 5 7">Most likely a component of a complex at least containing atg-5, lgg-3/ATG12, atg-16.1 and/or atg-16.2 (Probable). Interacts with lgg-3/ATG12 (By similarity). Interacts with atg-16.1 (via N-terminus) and atg-16.2 (via N-terminus) (PubMed:24185444).</text>
</comment>
<comment type="subcellular location">
    <subcellularLocation>
        <location evidence="3 5">Preautophagosomal structure membrane</location>
        <topology evidence="3">Peripheral membrane protein</topology>
    </subcellularLocation>
</comment>
<comment type="alternative products">
    <event type="alternative splicing"/>
    <isoform>
        <id>Q3V5I7-1</id>
        <name evidence="9">a</name>
        <sequence type="displayed"/>
    </isoform>
    <isoform>
        <id>Q3V5I7-2</id>
        <name evidence="10">b</name>
        <sequence type="described" ref="VSP_060205 VSP_060207"/>
    </isoform>
    <isoform>
        <id>Q3V5I7-3</id>
        <name evidence="11">c</name>
        <sequence type="described" ref="VSP_060206"/>
    </isoform>
</comment>
<comment type="PTM">
    <text evidence="2">Conjugated to lgg-3/ATG12; which is essential for autophagy.</text>
</comment>
<comment type="similarity">
    <text evidence="3">Belongs to the ATG5 family.</text>
</comment>
<dbReference type="EMBL" id="BX284601">
    <property type="protein sequence ID" value="CCD67969.1"/>
    <property type="molecule type" value="Genomic_DNA"/>
</dbReference>
<dbReference type="EMBL" id="BX284601">
    <property type="protein sequence ID" value="CCD67987.1"/>
    <property type="molecule type" value="Genomic_DNA"/>
</dbReference>
<dbReference type="EMBL" id="BX284601">
    <property type="protein sequence ID" value="CDM63580.1"/>
    <property type="molecule type" value="Genomic_DNA"/>
</dbReference>
<dbReference type="RefSeq" id="NP_001293440.1">
    <molecule id="Q3V5I7-3"/>
    <property type="nucleotide sequence ID" value="NM_001306511.5"/>
</dbReference>
<dbReference type="RefSeq" id="NP_490885.3">
    <molecule id="Q3V5I7-1"/>
    <property type="nucleotide sequence ID" value="NM_058484.9"/>
</dbReference>
<dbReference type="RefSeq" id="NP_871858.2">
    <molecule id="Q3V5I7-2"/>
    <property type="nucleotide sequence ID" value="NM_182058.5"/>
</dbReference>
<dbReference type="SMR" id="Q3V5I7"/>
<dbReference type="ComplexPortal" id="CPX-3863">
    <property type="entry name" value="atg-5-atg-12-atg-16.1-atg-16.2 complex"/>
</dbReference>
<dbReference type="ComplexPortal" id="CPX-3864">
    <property type="entry name" value="ATG12-ATG5 complex"/>
</dbReference>
<dbReference type="ComplexPortal" id="CPX-3865">
    <property type="entry name" value="atg-5-atg-12-atg-16.1 complex"/>
</dbReference>
<dbReference type="ComplexPortal" id="CPX-3866">
    <property type="entry name" value="atg-5-atg-12-atg-16.2 complex"/>
</dbReference>
<dbReference type="FunCoup" id="Q3V5I7">
    <property type="interactions" value="2936"/>
</dbReference>
<dbReference type="STRING" id="6239.Y71G12B.12a.1"/>
<dbReference type="PaxDb" id="6239-Y71G12B.12a.2"/>
<dbReference type="PeptideAtlas" id="Q3V5I7"/>
<dbReference type="EnsemblMetazoa" id="Y71G12B.12a.1">
    <molecule id="Q3V5I7-1"/>
    <property type="protein sequence ID" value="Y71G12B.12a.1"/>
    <property type="gene ID" value="WBGene00022152"/>
</dbReference>
<dbReference type="EnsemblMetazoa" id="Y71G12B.12b.1">
    <molecule id="Q3V5I7-2"/>
    <property type="protein sequence ID" value="Y71G12B.12b.1"/>
    <property type="gene ID" value="WBGene00022152"/>
</dbReference>
<dbReference type="EnsemblMetazoa" id="Y71G12B.12c.1">
    <molecule id="Q3V5I7-3"/>
    <property type="protein sequence ID" value="Y71G12B.12c.1"/>
    <property type="gene ID" value="WBGene00022152"/>
</dbReference>
<dbReference type="GeneID" id="171735"/>
<dbReference type="KEGG" id="cel:CELE_Y71G12B.12"/>
<dbReference type="AGR" id="WB:WBGene00022152"/>
<dbReference type="CTD" id="171735"/>
<dbReference type="WormBase" id="Y71G12B.12a">
    <molecule id="Q3V5I7-1"/>
    <property type="protein sequence ID" value="CE43967"/>
    <property type="gene ID" value="WBGene00022152"/>
    <property type="gene designation" value="atg-5"/>
</dbReference>
<dbReference type="WormBase" id="Y71G12B.12b">
    <molecule id="Q3V5I7-2"/>
    <property type="protein sequence ID" value="CE39066"/>
    <property type="gene ID" value="WBGene00022152"/>
    <property type="gene designation" value="atg-5"/>
</dbReference>
<dbReference type="WormBase" id="Y71G12B.12c">
    <molecule id="Q3V5I7-3"/>
    <property type="protein sequence ID" value="CE39065"/>
    <property type="gene ID" value="WBGene00022152"/>
    <property type="gene designation" value="atg-5"/>
</dbReference>
<dbReference type="eggNOG" id="KOG2976">
    <property type="taxonomic scope" value="Eukaryota"/>
</dbReference>
<dbReference type="GeneTree" id="ENSGT00390000004766"/>
<dbReference type="HOGENOM" id="CLU_051894_3_0_1"/>
<dbReference type="InParanoid" id="Q3V5I7"/>
<dbReference type="OMA" id="SIQKAVW"/>
<dbReference type="OrthoDB" id="272162at2759"/>
<dbReference type="PhylomeDB" id="Q3V5I7"/>
<dbReference type="Reactome" id="R-CEL-1632852">
    <property type="pathway name" value="Macroautophagy"/>
</dbReference>
<dbReference type="Reactome" id="R-CEL-5205685">
    <property type="pathway name" value="PINK1-PRKN Mediated Mitophagy"/>
</dbReference>
<dbReference type="Reactome" id="R-CEL-8934903">
    <property type="pathway name" value="Receptor Mediated Mitophagy"/>
</dbReference>
<dbReference type="PRO" id="PR:Q3V5I7"/>
<dbReference type="Proteomes" id="UP000001940">
    <property type="component" value="Chromosome I"/>
</dbReference>
<dbReference type="Bgee" id="WBGene00022152">
    <property type="expression patterns" value="Expressed in pharyngeal muscle cell (C elegans) and 4 other cell types or tissues"/>
</dbReference>
<dbReference type="GO" id="GO:0034274">
    <property type="term" value="C:Atg12-Atg5-Atg16 complex"/>
    <property type="evidence" value="ECO:0000318"/>
    <property type="project" value="GO_Central"/>
</dbReference>
<dbReference type="GO" id="GO:0005776">
    <property type="term" value="C:autophagosome"/>
    <property type="evidence" value="ECO:0000318"/>
    <property type="project" value="GO_Central"/>
</dbReference>
<dbReference type="GO" id="GO:0005737">
    <property type="term" value="C:cytoplasm"/>
    <property type="evidence" value="ECO:0000303"/>
    <property type="project" value="ComplexPortal"/>
</dbReference>
<dbReference type="GO" id="GO:0005829">
    <property type="term" value="C:cytosol"/>
    <property type="evidence" value="ECO:0000303"/>
    <property type="project" value="ComplexPortal"/>
</dbReference>
<dbReference type="GO" id="GO:0061908">
    <property type="term" value="C:phagophore"/>
    <property type="evidence" value="ECO:0000318"/>
    <property type="project" value="GO_Central"/>
</dbReference>
<dbReference type="GO" id="GO:0034045">
    <property type="term" value="C:phagophore assembly site membrane"/>
    <property type="evidence" value="ECO:0000318"/>
    <property type="project" value="GO_Central"/>
</dbReference>
<dbReference type="GO" id="GO:1990234">
    <property type="term" value="C:transferase complex"/>
    <property type="evidence" value="ECO:0000303"/>
    <property type="project" value="ComplexPortal"/>
</dbReference>
<dbReference type="GO" id="GO:0035973">
    <property type="term" value="P:aggrephagy"/>
    <property type="evidence" value="ECO:0000318"/>
    <property type="project" value="GO_Central"/>
</dbReference>
<dbReference type="GO" id="GO:0000045">
    <property type="term" value="P:autophagosome assembly"/>
    <property type="evidence" value="ECO:0000315"/>
    <property type="project" value="UniProtKB"/>
</dbReference>
<dbReference type="GO" id="GO:0006914">
    <property type="term" value="P:autophagy"/>
    <property type="evidence" value="ECO:0000315"/>
    <property type="project" value="WormBase"/>
</dbReference>
<dbReference type="GO" id="GO:0006995">
    <property type="term" value="P:cellular response to nitrogen starvation"/>
    <property type="evidence" value="ECO:0000318"/>
    <property type="project" value="GO_Central"/>
</dbReference>
<dbReference type="GO" id="GO:0016236">
    <property type="term" value="P:macroautophagy"/>
    <property type="evidence" value="ECO:0000303"/>
    <property type="project" value="ComplexPortal"/>
</dbReference>
<dbReference type="GO" id="GO:0000423">
    <property type="term" value="P:mitophagy"/>
    <property type="evidence" value="ECO:0000318"/>
    <property type="project" value="GO_Central"/>
</dbReference>
<dbReference type="GO" id="GO:0034727">
    <property type="term" value="P:piecemeal microautophagy of the nucleus"/>
    <property type="evidence" value="ECO:0000318"/>
    <property type="project" value="GO_Central"/>
</dbReference>
<dbReference type="GO" id="GO:0010506">
    <property type="term" value="P:regulation of autophagy"/>
    <property type="evidence" value="ECO:0000315"/>
    <property type="project" value="UniProtKB"/>
</dbReference>
<dbReference type="FunFam" id="3.10.20.620:FF:000005">
    <property type="entry name" value="Autophagy protein 5"/>
    <property type="match status" value="1"/>
</dbReference>
<dbReference type="FunFam" id="3.10.20.90:FF:000468">
    <property type="entry name" value="Autophagy protein 5"/>
    <property type="match status" value="1"/>
</dbReference>
<dbReference type="FunFam" id="1.10.246.190:FF:000001">
    <property type="entry name" value="Autophagy related 5"/>
    <property type="match status" value="1"/>
</dbReference>
<dbReference type="Gene3D" id="3.10.20.620">
    <property type="match status" value="1"/>
</dbReference>
<dbReference type="Gene3D" id="1.10.246.190">
    <property type="entry name" value="Autophagy protein Apg5, helix rich domain"/>
    <property type="match status" value="1"/>
</dbReference>
<dbReference type="Gene3D" id="3.10.20.90">
    <property type="entry name" value="Phosphatidylinositol 3-kinase Catalytic Subunit, Chain A, domain 1"/>
    <property type="match status" value="1"/>
</dbReference>
<dbReference type="InterPro" id="IPR007239">
    <property type="entry name" value="Atg5"/>
</dbReference>
<dbReference type="InterPro" id="IPR048940">
    <property type="entry name" value="ATG5_HBR"/>
</dbReference>
<dbReference type="InterPro" id="IPR042526">
    <property type="entry name" value="Atg5_HR"/>
</dbReference>
<dbReference type="InterPro" id="IPR048939">
    <property type="entry name" value="ATG5_UblA"/>
</dbReference>
<dbReference type="InterPro" id="IPR042527">
    <property type="entry name" value="Atg5_UblA_dom_sf"/>
</dbReference>
<dbReference type="InterPro" id="IPR048318">
    <property type="entry name" value="ATG5_UblB"/>
</dbReference>
<dbReference type="PANTHER" id="PTHR13040">
    <property type="entry name" value="AUTOPHAGY PROTEIN 5"/>
    <property type="match status" value="1"/>
</dbReference>
<dbReference type="PANTHER" id="PTHR13040:SF2">
    <property type="entry name" value="AUTOPHAGY PROTEIN 5"/>
    <property type="match status" value="1"/>
</dbReference>
<dbReference type="Pfam" id="PF20637">
    <property type="entry name" value="ATG5_HBR"/>
    <property type="match status" value="1"/>
</dbReference>
<dbReference type="Pfam" id="PF20638">
    <property type="entry name" value="ATG5_UblA"/>
    <property type="match status" value="1"/>
</dbReference>
<dbReference type="Pfam" id="PF04106">
    <property type="entry name" value="ATG5_UblB"/>
    <property type="match status" value="1"/>
</dbReference>